<reference key="1">
    <citation type="journal article" date="2006" name="Proc. Natl. Acad. Sci. U.S.A.">
        <title>Comparative genomics of the lactic acid bacteria.</title>
        <authorList>
            <person name="Makarova K.S."/>
            <person name="Slesarev A."/>
            <person name="Wolf Y.I."/>
            <person name="Sorokin A."/>
            <person name="Mirkin B."/>
            <person name="Koonin E.V."/>
            <person name="Pavlov A."/>
            <person name="Pavlova N."/>
            <person name="Karamychev V."/>
            <person name="Polouchine N."/>
            <person name="Shakhova V."/>
            <person name="Grigoriev I."/>
            <person name="Lou Y."/>
            <person name="Rohksar D."/>
            <person name="Lucas S."/>
            <person name="Huang K."/>
            <person name="Goodstein D.M."/>
            <person name="Hawkins T."/>
            <person name="Plengvidhya V."/>
            <person name="Welker D."/>
            <person name="Hughes J."/>
            <person name="Goh Y."/>
            <person name="Benson A."/>
            <person name="Baldwin K."/>
            <person name="Lee J.-H."/>
            <person name="Diaz-Muniz I."/>
            <person name="Dosti B."/>
            <person name="Smeianov V."/>
            <person name="Wechter W."/>
            <person name="Barabote R."/>
            <person name="Lorca G."/>
            <person name="Altermann E."/>
            <person name="Barrangou R."/>
            <person name="Ganesan B."/>
            <person name="Xie Y."/>
            <person name="Rawsthorne H."/>
            <person name="Tamir D."/>
            <person name="Parker C."/>
            <person name="Breidt F."/>
            <person name="Broadbent J.R."/>
            <person name="Hutkins R."/>
            <person name="O'Sullivan D."/>
            <person name="Steele J."/>
            <person name="Unlu G."/>
            <person name="Saier M.H. Jr."/>
            <person name="Klaenhammer T."/>
            <person name="Richardson P."/>
            <person name="Kozyavkin S."/>
            <person name="Weimer B.C."/>
            <person name="Mills D.A."/>
        </authorList>
    </citation>
    <scope>NUCLEOTIDE SEQUENCE [LARGE SCALE GENOMIC DNA]</scope>
    <source>
        <strain>ATCC 367 / BCRC 12310 / CIP 105137 / JCM 1170 / LMG 11437 / NCIMB 947 / NCTC 947</strain>
    </source>
</reference>
<gene>
    <name evidence="1" type="primary">rpoA</name>
    <name type="ordered locus">LVIS_1664</name>
</gene>
<keyword id="KW-0240">DNA-directed RNA polymerase</keyword>
<keyword id="KW-0548">Nucleotidyltransferase</keyword>
<keyword id="KW-1185">Reference proteome</keyword>
<keyword id="KW-0804">Transcription</keyword>
<keyword id="KW-0808">Transferase</keyword>
<accession>Q03PY3</accession>
<organism>
    <name type="scientific">Levilactobacillus brevis (strain ATCC 367 / BCRC 12310 / CIP 105137 / JCM 1170 / LMG 11437 / NCIMB 947 / NCTC 947)</name>
    <name type="common">Lactobacillus brevis</name>
    <dbReference type="NCBI Taxonomy" id="387344"/>
    <lineage>
        <taxon>Bacteria</taxon>
        <taxon>Bacillati</taxon>
        <taxon>Bacillota</taxon>
        <taxon>Bacilli</taxon>
        <taxon>Lactobacillales</taxon>
        <taxon>Lactobacillaceae</taxon>
        <taxon>Levilactobacillus</taxon>
    </lineage>
</organism>
<proteinExistence type="inferred from homology"/>
<name>RPOA_LEVBA</name>
<protein>
    <recommendedName>
        <fullName evidence="1">DNA-directed RNA polymerase subunit alpha</fullName>
        <shortName evidence="1">RNAP subunit alpha</shortName>
        <ecNumber evidence="1">2.7.7.6</ecNumber>
    </recommendedName>
    <alternativeName>
        <fullName evidence="1">RNA polymerase subunit alpha</fullName>
    </alternativeName>
    <alternativeName>
        <fullName evidence="1">Transcriptase subunit alpha</fullName>
    </alternativeName>
</protein>
<sequence>MIEFEKPNIHKIDESNNYGKFIVEPLERGYGTTLGNSLRRILLSSLPGAAVTSIQIDGVLHEFSTVEGVVEDVTQIILNVKKIALKLNGSDDQEETMEINVKGPAQITAGDIVAGADVDILNPDLYIATVADGATFHMRMTADKGRGYVSADENKTRNTDMPIGVLAVDSIYTPIERVNYQVENARVGQRADYDKLTLDVWTNGSINPSEAIALAAKILTEHLAMFVDLTDEAKNAEIMVEKEETHKEKMLEMTIEELDLSVRSYNCLKRAGINTVQELNNKTEADMMKVRNLGRKSLEEVKAKLADLGLSLRKED</sequence>
<dbReference type="EC" id="2.7.7.6" evidence="1"/>
<dbReference type="EMBL" id="CP000416">
    <property type="protein sequence ID" value="ABJ64739.1"/>
    <property type="molecule type" value="Genomic_DNA"/>
</dbReference>
<dbReference type="RefSeq" id="WP_011668473.1">
    <property type="nucleotide sequence ID" value="NC_008497.1"/>
</dbReference>
<dbReference type="SMR" id="Q03PY3"/>
<dbReference type="STRING" id="387344.LVIS_1664"/>
<dbReference type="KEGG" id="lbr:LVIS_1664"/>
<dbReference type="eggNOG" id="COG0202">
    <property type="taxonomic scope" value="Bacteria"/>
</dbReference>
<dbReference type="HOGENOM" id="CLU_053084_0_1_9"/>
<dbReference type="Proteomes" id="UP000001652">
    <property type="component" value="Chromosome"/>
</dbReference>
<dbReference type="GO" id="GO:0005737">
    <property type="term" value="C:cytoplasm"/>
    <property type="evidence" value="ECO:0007669"/>
    <property type="project" value="UniProtKB-ARBA"/>
</dbReference>
<dbReference type="GO" id="GO:0000428">
    <property type="term" value="C:DNA-directed RNA polymerase complex"/>
    <property type="evidence" value="ECO:0007669"/>
    <property type="project" value="UniProtKB-KW"/>
</dbReference>
<dbReference type="GO" id="GO:0003677">
    <property type="term" value="F:DNA binding"/>
    <property type="evidence" value="ECO:0007669"/>
    <property type="project" value="UniProtKB-UniRule"/>
</dbReference>
<dbReference type="GO" id="GO:0003899">
    <property type="term" value="F:DNA-directed RNA polymerase activity"/>
    <property type="evidence" value="ECO:0007669"/>
    <property type="project" value="UniProtKB-UniRule"/>
</dbReference>
<dbReference type="GO" id="GO:0046983">
    <property type="term" value="F:protein dimerization activity"/>
    <property type="evidence" value="ECO:0007669"/>
    <property type="project" value="InterPro"/>
</dbReference>
<dbReference type="GO" id="GO:0006351">
    <property type="term" value="P:DNA-templated transcription"/>
    <property type="evidence" value="ECO:0007669"/>
    <property type="project" value="UniProtKB-UniRule"/>
</dbReference>
<dbReference type="CDD" id="cd06928">
    <property type="entry name" value="RNAP_alpha_NTD"/>
    <property type="match status" value="1"/>
</dbReference>
<dbReference type="FunFam" id="1.10.150.20:FF:000001">
    <property type="entry name" value="DNA-directed RNA polymerase subunit alpha"/>
    <property type="match status" value="1"/>
</dbReference>
<dbReference type="FunFam" id="2.170.120.12:FF:000001">
    <property type="entry name" value="DNA-directed RNA polymerase subunit alpha"/>
    <property type="match status" value="1"/>
</dbReference>
<dbReference type="Gene3D" id="1.10.150.20">
    <property type="entry name" value="5' to 3' exonuclease, C-terminal subdomain"/>
    <property type="match status" value="1"/>
</dbReference>
<dbReference type="Gene3D" id="2.170.120.12">
    <property type="entry name" value="DNA-directed RNA polymerase, insert domain"/>
    <property type="match status" value="1"/>
</dbReference>
<dbReference type="Gene3D" id="3.30.1360.10">
    <property type="entry name" value="RNA polymerase, RBP11-like subunit"/>
    <property type="match status" value="1"/>
</dbReference>
<dbReference type="HAMAP" id="MF_00059">
    <property type="entry name" value="RNApol_bact_RpoA"/>
    <property type="match status" value="1"/>
</dbReference>
<dbReference type="InterPro" id="IPR011262">
    <property type="entry name" value="DNA-dir_RNA_pol_insert"/>
</dbReference>
<dbReference type="InterPro" id="IPR011263">
    <property type="entry name" value="DNA-dir_RNA_pol_RpoA/D/Rpb3"/>
</dbReference>
<dbReference type="InterPro" id="IPR011773">
    <property type="entry name" value="DNA-dir_RpoA"/>
</dbReference>
<dbReference type="InterPro" id="IPR036603">
    <property type="entry name" value="RBP11-like"/>
</dbReference>
<dbReference type="InterPro" id="IPR011260">
    <property type="entry name" value="RNAP_asu_C"/>
</dbReference>
<dbReference type="InterPro" id="IPR036643">
    <property type="entry name" value="RNApol_insert_sf"/>
</dbReference>
<dbReference type="NCBIfam" id="NF003513">
    <property type="entry name" value="PRK05182.1-2"/>
    <property type="match status" value="1"/>
</dbReference>
<dbReference type="NCBIfam" id="NF003515">
    <property type="entry name" value="PRK05182.2-1"/>
    <property type="match status" value="1"/>
</dbReference>
<dbReference type="NCBIfam" id="NF003516">
    <property type="entry name" value="PRK05182.2-2"/>
    <property type="match status" value="1"/>
</dbReference>
<dbReference type="NCBIfam" id="NF003519">
    <property type="entry name" value="PRK05182.2-5"/>
    <property type="match status" value="1"/>
</dbReference>
<dbReference type="NCBIfam" id="TIGR02027">
    <property type="entry name" value="rpoA"/>
    <property type="match status" value="1"/>
</dbReference>
<dbReference type="Pfam" id="PF01000">
    <property type="entry name" value="RNA_pol_A_bac"/>
    <property type="match status" value="1"/>
</dbReference>
<dbReference type="Pfam" id="PF03118">
    <property type="entry name" value="RNA_pol_A_CTD"/>
    <property type="match status" value="1"/>
</dbReference>
<dbReference type="Pfam" id="PF01193">
    <property type="entry name" value="RNA_pol_L"/>
    <property type="match status" value="1"/>
</dbReference>
<dbReference type="SMART" id="SM00662">
    <property type="entry name" value="RPOLD"/>
    <property type="match status" value="1"/>
</dbReference>
<dbReference type="SUPFAM" id="SSF47789">
    <property type="entry name" value="C-terminal domain of RNA polymerase alpha subunit"/>
    <property type="match status" value="1"/>
</dbReference>
<dbReference type="SUPFAM" id="SSF56553">
    <property type="entry name" value="Insert subdomain of RNA polymerase alpha subunit"/>
    <property type="match status" value="1"/>
</dbReference>
<dbReference type="SUPFAM" id="SSF55257">
    <property type="entry name" value="RBP11-like subunits of RNA polymerase"/>
    <property type="match status" value="1"/>
</dbReference>
<comment type="function">
    <text evidence="1">DNA-dependent RNA polymerase catalyzes the transcription of DNA into RNA using the four ribonucleoside triphosphates as substrates.</text>
</comment>
<comment type="catalytic activity">
    <reaction evidence="1">
        <text>RNA(n) + a ribonucleoside 5'-triphosphate = RNA(n+1) + diphosphate</text>
        <dbReference type="Rhea" id="RHEA:21248"/>
        <dbReference type="Rhea" id="RHEA-COMP:14527"/>
        <dbReference type="Rhea" id="RHEA-COMP:17342"/>
        <dbReference type="ChEBI" id="CHEBI:33019"/>
        <dbReference type="ChEBI" id="CHEBI:61557"/>
        <dbReference type="ChEBI" id="CHEBI:140395"/>
        <dbReference type="EC" id="2.7.7.6"/>
    </reaction>
</comment>
<comment type="subunit">
    <text evidence="1">Homodimer. The RNAP catalytic core consists of 2 alpha, 1 beta, 1 beta' and 1 omega subunit. When a sigma factor is associated with the core the holoenzyme is formed, which can initiate transcription.</text>
</comment>
<comment type="domain">
    <text evidence="1">The N-terminal domain is essential for RNAP assembly and basal transcription, whereas the C-terminal domain is involved in interaction with transcriptional regulators and with upstream promoter elements.</text>
</comment>
<comment type="similarity">
    <text evidence="1">Belongs to the RNA polymerase alpha chain family.</text>
</comment>
<evidence type="ECO:0000255" key="1">
    <source>
        <dbReference type="HAMAP-Rule" id="MF_00059"/>
    </source>
</evidence>
<feature type="chain" id="PRO_0000296820" description="DNA-directed RNA polymerase subunit alpha">
    <location>
        <begin position="1"/>
        <end position="316"/>
    </location>
</feature>
<feature type="region of interest" description="Alpha N-terminal domain (alpha-NTD)" evidence="1">
    <location>
        <begin position="1"/>
        <end position="230"/>
    </location>
</feature>
<feature type="region of interest" description="Alpha C-terminal domain (alpha-CTD)" evidence="1">
    <location>
        <begin position="247"/>
        <end position="316"/>
    </location>
</feature>